<accession>Q3B8H2</accession>
<protein>
    <recommendedName>
        <fullName>Toll-interacting protein A</fullName>
    </recommendedName>
</protein>
<organism>
    <name type="scientific">Xenopus laevis</name>
    <name type="common">African clawed frog</name>
    <dbReference type="NCBI Taxonomy" id="8355"/>
    <lineage>
        <taxon>Eukaryota</taxon>
        <taxon>Metazoa</taxon>
        <taxon>Chordata</taxon>
        <taxon>Craniata</taxon>
        <taxon>Vertebrata</taxon>
        <taxon>Euteleostomi</taxon>
        <taxon>Amphibia</taxon>
        <taxon>Batrachia</taxon>
        <taxon>Anura</taxon>
        <taxon>Pipoidea</taxon>
        <taxon>Pipidae</taxon>
        <taxon>Xenopodinae</taxon>
        <taxon>Xenopus</taxon>
        <taxon>Xenopus</taxon>
    </lineage>
</organism>
<sequence length="269" mass="29878">MATSISTQRGQVFIGELPQDFLRIAPTQQQQQIQLDAQAAQQLQYSGVMGTMGRLSITVVQAKLAKNYGMTRMDPYCRIRLGYAVYETPTAHNGAKNPRWNKVIQCTIPPGVDSFYLEIFDERAFSMDDRIAWTHITIPETLKEGKHVDEWFSLSGRQGDDKEGMINLVMSYTSVPAMMPAQPVVLMPTVYQQGVGYVPIAGPVYNPGMPMIASPPAVNPQHQTQEVDIQSIKDMFPTIDPEVIRSVLEAQGGNRDAAINSLLQMVEDS</sequence>
<gene>
    <name type="primary">tollip-a</name>
</gene>
<proteinExistence type="evidence at transcript level"/>
<evidence type="ECO:0000250" key="1"/>
<evidence type="ECO:0000255" key="2">
    <source>
        <dbReference type="PROSITE-ProRule" id="PRU00041"/>
    </source>
</evidence>
<evidence type="ECO:0000255" key="3">
    <source>
        <dbReference type="PROSITE-ProRule" id="PRU00468"/>
    </source>
</evidence>
<evidence type="ECO:0000305" key="4"/>
<name>TOIPA_XENLA</name>
<feature type="chain" id="PRO_0000384938" description="Toll-interacting protein A">
    <location>
        <begin position="1"/>
        <end position="269"/>
    </location>
</feature>
<feature type="domain" description="C2" evidence="2">
    <location>
        <begin position="35"/>
        <end position="152"/>
    </location>
</feature>
<feature type="domain" description="CUE" evidence="3">
    <location>
        <begin position="224"/>
        <end position="267"/>
    </location>
</feature>
<feature type="short sequence motif" description="AIM1">
    <location>
        <begin position="133"/>
        <end position="136"/>
    </location>
</feature>
<feature type="short sequence motif" description="AIM2">
    <location>
        <begin position="151"/>
        <end position="154"/>
    </location>
</feature>
<reference key="1">
    <citation type="submission" date="2005-10" db="EMBL/GenBank/DDBJ databases">
        <authorList>
            <consortium name="NIH - Xenopus Gene Collection (XGC) project"/>
        </authorList>
    </citation>
    <scope>NUCLEOTIDE SEQUENCE [LARGE SCALE MRNA]</scope>
    <source>
        <tissue>Testis</tissue>
    </source>
</reference>
<keyword id="KW-0072">Autophagy</keyword>
<keyword id="KW-0963">Cytoplasm</keyword>
<keyword id="KW-0391">Immunity</keyword>
<keyword id="KW-0395">Inflammatory response</keyword>
<keyword id="KW-0399">Innate immunity</keyword>
<keyword id="KW-1185">Reference proteome</keyword>
<keyword id="KW-0677">Repeat</keyword>
<comment type="function">
    <text evidence="1">Component of the signaling pathway of IL-1 and Toll-like receptors. Inhibits cell activation by microbial products. Connects the ubiquitin pathway to autophagy by functioning as a ubiquitin-ATG8 family adapter and thus mediating autophagic clearance of ubiquitin conjugates. The TOLLIP-dependent selective autophagy pathway plays an important role in clearance of cytotoxic polyQ proteins aggregates (By similarity).</text>
</comment>
<comment type="subunit">
    <text evidence="1">Interacts with ATG8 family proteins (via AIM motifs), and ubiquitin (via CUE domain).</text>
</comment>
<comment type="subcellular location">
    <subcellularLocation>
        <location evidence="4">Cytoplasm</location>
    </subcellularLocation>
</comment>
<comment type="domain">
    <text evidence="1">Both ATG8-interaction motifs (AIM1 and AIM2) are required for the association with ATG8 family proteins.</text>
</comment>
<comment type="similarity">
    <text evidence="4">Belongs to the tollip family.</text>
</comment>
<dbReference type="EMBL" id="BC106437">
    <property type="protein sequence ID" value="AAI06438.1"/>
    <property type="molecule type" value="mRNA"/>
</dbReference>
<dbReference type="RefSeq" id="NP_001089737.1">
    <property type="nucleotide sequence ID" value="NM_001096268.1"/>
</dbReference>
<dbReference type="SMR" id="Q3B8H2"/>
<dbReference type="DNASU" id="734800"/>
<dbReference type="GeneID" id="734800"/>
<dbReference type="KEGG" id="xla:734800"/>
<dbReference type="AGR" id="Xenbase:XB-GENE-6255027"/>
<dbReference type="CTD" id="734800"/>
<dbReference type="Xenbase" id="XB-GENE-6255027">
    <property type="gene designation" value="tollip.S"/>
</dbReference>
<dbReference type="OMA" id="IYIQIFD"/>
<dbReference type="OrthoDB" id="9942608at2759"/>
<dbReference type="Proteomes" id="UP000186698">
    <property type="component" value="Chromosome 4S"/>
</dbReference>
<dbReference type="Bgee" id="734800">
    <property type="expression patterns" value="Expressed in blastula and 19 other cell types or tissues"/>
</dbReference>
<dbReference type="GO" id="GO:0005737">
    <property type="term" value="C:cytoplasm"/>
    <property type="evidence" value="ECO:0000318"/>
    <property type="project" value="GO_Central"/>
</dbReference>
<dbReference type="GO" id="GO:0043130">
    <property type="term" value="F:ubiquitin binding"/>
    <property type="evidence" value="ECO:0000318"/>
    <property type="project" value="GO_Central"/>
</dbReference>
<dbReference type="GO" id="GO:0031624">
    <property type="term" value="F:ubiquitin conjugating enzyme binding"/>
    <property type="evidence" value="ECO:0000318"/>
    <property type="project" value="GO_Central"/>
</dbReference>
<dbReference type="GO" id="GO:0006914">
    <property type="term" value="P:autophagy"/>
    <property type="evidence" value="ECO:0007669"/>
    <property type="project" value="UniProtKB-KW"/>
</dbReference>
<dbReference type="GO" id="GO:0006954">
    <property type="term" value="P:inflammatory response"/>
    <property type="evidence" value="ECO:0007669"/>
    <property type="project" value="UniProtKB-KW"/>
</dbReference>
<dbReference type="GO" id="GO:0045087">
    <property type="term" value="P:innate immune response"/>
    <property type="evidence" value="ECO:0007669"/>
    <property type="project" value="UniProtKB-KW"/>
</dbReference>
<dbReference type="GO" id="GO:0016310">
    <property type="term" value="P:phosphorylation"/>
    <property type="evidence" value="ECO:0000250"/>
    <property type="project" value="UniProtKB"/>
</dbReference>
<dbReference type="GO" id="GO:0006511">
    <property type="term" value="P:ubiquitin-dependent protein catabolic process"/>
    <property type="evidence" value="ECO:0000318"/>
    <property type="project" value="GO_Central"/>
</dbReference>
<dbReference type="CDD" id="cd04016">
    <property type="entry name" value="C2_Tollip"/>
    <property type="match status" value="1"/>
</dbReference>
<dbReference type="CDD" id="cd14363">
    <property type="entry name" value="CUE_TOLIP"/>
    <property type="match status" value="1"/>
</dbReference>
<dbReference type="FunFam" id="1.10.8.10:FF:000036">
    <property type="entry name" value="Toll-interacting protein-like Protein"/>
    <property type="match status" value="1"/>
</dbReference>
<dbReference type="FunFam" id="2.60.40.150:FF:000055">
    <property type="entry name" value="Toll-interacting protein-like Protein"/>
    <property type="match status" value="1"/>
</dbReference>
<dbReference type="Gene3D" id="2.60.40.150">
    <property type="entry name" value="C2 domain"/>
    <property type="match status" value="1"/>
</dbReference>
<dbReference type="Gene3D" id="1.10.8.10">
    <property type="entry name" value="DNA helicase RuvA subunit, C-terminal domain"/>
    <property type="match status" value="1"/>
</dbReference>
<dbReference type="InterPro" id="IPR000008">
    <property type="entry name" value="C2_dom"/>
</dbReference>
<dbReference type="InterPro" id="IPR035892">
    <property type="entry name" value="C2_domain_sf"/>
</dbReference>
<dbReference type="InterPro" id="IPR003892">
    <property type="entry name" value="CUE"/>
</dbReference>
<dbReference type="InterPro" id="IPR041799">
    <property type="entry name" value="TOLIP_CUE"/>
</dbReference>
<dbReference type="InterPro" id="IPR037301">
    <property type="entry name" value="Tollip_C2"/>
</dbReference>
<dbReference type="InterPro" id="IPR009060">
    <property type="entry name" value="UBA-like_sf"/>
</dbReference>
<dbReference type="PANTHER" id="PTHR16461">
    <property type="entry name" value="TOLL-INTERACTING PROTEIN"/>
    <property type="match status" value="1"/>
</dbReference>
<dbReference type="PANTHER" id="PTHR16461:SF5">
    <property type="entry name" value="TOLL-INTERACTING PROTEIN"/>
    <property type="match status" value="1"/>
</dbReference>
<dbReference type="Pfam" id="PF00168">
    <property type="entry name" value="C2"/>
    <property type="match status" value="1"/>
</dbReference>
<dbReference type="Pfam" id="PF02845">
    <property type="entry name" value="CUE"/>
    <property type="match status" value="1"/>
</dbReference>
<dbReference type="SMART" id="SM00239">
    <property type="entry name" value="C2"/>
    <property type="match status" value="1"/>
</dbReference>
<dbReference type="SMART" id="SM00546">
    <property type="entry name" value="CUE"/>
    <property type="match status" value="1"/>
</dbReference>
<dbReference type="SUPFAM" id="SSF49562">
    <property type="entry name" value="C2 domain (Calcium/lipid-binding domain, CaLB)"/>
    <property type="match status" value="1"/>
</dbReference>
<dbReference type="SUPFAM" id="SSF46934">
    <property type="entry name" value="UBA-like"/>
    <property type="match status" value="1"/>
</dbReference>
<dbReference type="PROSITE" id="PS50004">
    <property type="entry name" value="C2"/>
    <property type="match status" value="1"/>
</dbReference>
<dbReference type="PROSITE" id="PS51140">
    <property type="entry name" value="CUE"/>
    <property type="match status" value="1"/>
</dbReference>